<organism>
    <name type="scientific">Homo sapiens</name>
    <name type="common">Human</name>
    <dbReference type="NCBI Taxonomy" id="9606"/>
    <lineage>
        <taxon>Eukaryota</taxon>
        <taxon>Metazoa</taxon>
        <taxon>Chordata</taxon>
        <taxon>Craniata</taxon>
        <taxon>Vertebrata</taxon>
        <taxon>Euteleostomi</taxon>
        <taxon>Mammalia</taxon>
        <taxon>Eutheria</taxon>
        <taxon>Euarchontoglires</taxon>
        <taxon>Primates</taxon>
        <taxon>Haplorrhini</taxon>
        <taxon>Catarrhini</taxon>
        <taxon>Hominidae</taxon>
        <taxon>Homo</taxon>
    </lineage>
</organism>
<proteinExistence type="evidence at protein level"/>
<accession>Q9NPA1</accession>
<accession>B7Z9C9</accession>
<accession>D3DNR2</accession>
<accession>E9PER5</accession>
<accession>Q9NPG7</accession>
<accession>Q9NRM9</accession>
<accession>Q9UHN3</accession>
<protein>
    <recommendedName>
        <fullName>Calcium-activated potassium channel subunit beta-3</fullName>
    </recommendedName>
    <alternativeName>
        <fullName>BK channel subunit beta-3</fullName>
        <shortName>BKbeta3</shortName>
        <shortName>Hbeta3</shortName>
    </alternativeName>
    <alternativeName>
        <fullName>Calcium-activated potassium channel, subfamily M subunit beta-3</fullName>
    </alternativeName>
    <alternativeName>
        <fullName>Charybdotoxin receptor subunit beta-3</fullName>
    </alternativeName>
    <alternativeName>
        <fullName>K(VCA)beta-3</fullName>
    </alternativeName>
    <alternativeName>
        <fullName>Maxi K channel subunit beta-3</fullName>
    </alternativeName>
    <alternativeName>
        <fullName>Slo-beta-3</fullName>
    </alternativeName>
</protein>
<evidence type="ECO:0000255" key="1"/>
<evidence type="ECO:0000269" key="2">
    <source>
    </source>
</evidence>
<evidence type="ECO:0000269" key="3">
    <source>
    </source>
</evidence>
<evidence type="ECO:0000269" key="4">
    <source>
    </source>
</evidence>
<evidence type="ECO:0000269" key="5">
    <source>
    </source>
</evidence>
<evidence type="ECO:0000269" key="6">
    <source>
    </source>
</evidence>
<evidence type="ECO:0000269" key="7">
    <source>
    </source>
</evidence>
<evidence type="ECO:0000269" key="8">
    <source>
    </source>
</evidence>
<evidence type="ECO:0000303" key="9">
    <source>
    </source>
</evidence>
<evidence type="ECO:0000303" key="10">
    <source>
    </source>
</evidence>
<evidence type="ECO:0000303" key="11">
    <source>
    </source>
</evidence>
<evidence type="ECO:0000303" key="12">
    <source>
    </source>
</evidence>
<evidence type="ECO:0000305" key="13"/>
<gene>
    <name type="primary">KCNMB3</name>
    <name type="synonym">KCNMB2</name>
    <name type="synonym">KCNMBL</name>
</gene>
<reference key="1">
    <citation type="journal article" date="1999" name="Genomics">
        <title>Identification of a putative regulatory subunit of a calcium-activated potassium channel in the dup(3q) syndrome region and a related sequence on 22q11.2.</title>
        <authorList>
            <person name="Riazi M.A."/>
            <person name="Brinkman-Mills P."/>
            <person name="Johnson A."/>
            <person name="Naylor S.L."/>
            <person name="Minoshima S."/>
            <person name="Shimizu N."/>
            <person name="Baldini A."/>
            <person name="McDermid H.E."/>
        </authorList>
    </citation>
    <scope>NUCLEOTIDE SEQUENCE [MRNA] (ISOFORM 3)</scope>
    <scope>VARIANT THR-53</scope>
    <scope>TISSUE SPECIFICITY</scope>
</reference>
<reference key="2">
    <citation type="journal article" date="2000" name="J. Biol. Chem.">
        <title>Cloning and functional characterization of novel large conductance calcium-activated potassium channel beta subunits, hKCNMB3 and hKCNMB4.</title>
        <authorList>
            <person name="Brenner R."/>
            <person name="Jegla T.J."/>
            <person name="Wickenden A."/>
            <person name="Liu Y."/>
            <person name="Aldrich R.W."/>
        </authorList>
    </citation>
    <scope>NUCLEOTIDE SEQUENCE [MRNA] (ISOFORM 4)</scope>
    <scope>VARIANT THR-53</scope>
    <scope>TISSUE SPECIFICITY</scope>
    <scope>INTERACTION WITH KCNMA1</scope>
    <source>
        <tissue>Brain</tissue>
    </source>
</reference>
<reference key="3">
    <citation type="journal article" date="2000" name="J. Biol. Chem.">
        <title>Cloning and functional expression of two families of Beta-subunits of the large conductance calcium-activated potassium channel.</title>
        <authorList>
            <person name="Uebele V.N."/>
            <person name="Lagrutta A.A."/>
            <person name="Wade T."/>
            <person name="Figueroa D.J."/>
            <person name="Liu Y."/>
            <person name="McKenna E."/>
            <person name="Austin C.P."/>
            <person name="Bennett P.B."/>
            <person name="Swanson R."/>
        </authorList>
    </citation>
    <scope>NUCLEOTIDE SEQUENCE [GENOMIC DNA] (ISOFORMS 1; 2; 3 AND 4)</scope>
    <scope>FUNCTION</scope>
    <scope>ALTERNATIVE SPLICING</scope>
    <scope>TISSUE SPECIFICITY</scope>
    <scope>VARIANTS THR-53 AND SER-165</scope>
    <source>
        <tissue>Spleen</tissue>
    </source>
</reference>
<reference key="4">
    <citation type="journal article" date="2000" name="Proc. Natl. Acad. Sci. U.S.A.">
        <title>A neuronal beta subunit (KCNMB4) makes the large conductance, voltage- and Ca2+-activated K+ channel resistant to charybdotoxin and iberiotoxin.</title>
        <authorList>
            <person name="Meera P."/>
            <person name="Wallner M."/>
            <person name="Toro L."/>
        </authorList>
    </citation>
    <scope>NUCLEOTIDE SEQUENCE [MRNA] (ISOFORM 1)</scope>
    <scope>VARIANT THR-53</scope>
    <scope>GLYCOSYLATION</scope>
</reference>
<reference key="5">
    <citation type="journal article" date="2000" name="FEBS Lett.">
        <title>hKCNMB3 and hKCNMB4, cloning and characterization of two members of the large-conductance calcium-activated potassium channel beta subunit family.</title>
        <authorList>
            <person name="Behrens R."/>
            <person name="Nolting A."/>
            <person name="Reimann F."/>
            <person name="Schwarz M."/>
            <person name="Waldschuetz R."/>
            <person name="Pongs O."/>
        </authorList>
    </citation>
    <scope>NUCLEOTIDE SEQUENCE [MRNA] (ISOFORM 4)</scope>
    <scope>VARIANT THR-53</scope>
</reference>
<reference key="6">
    <citation type="journal article" date="2004" name="Nat. Genet.">
        <title>Complete sequencing and characterization of 21,243 full-length human cDNAs.</title>
        <authorList>
            <person name="Ota T."/>
            <person name="Suzuki Y."/>
            <person name="Nishikawa T."/>
            <person name="Otsuki T."/>
            <person name="Sugiyama T."/>
            <person name="Irie R."/>
            <person name="Wakamatsu A."/>
            <person name="Hayashi K."/>
            <person name="Sato H."/>
            <person name="Nagai K."/>
            <person name="Kimura K."/>
            <person name="Makita H."/>
            <person name="Sekine M."/>
            <person name="Obayashi M."/>
            <person name="Nishi T."/>
            <person name="Shibahara T."/>
            <person name="Tanaka T."/>
            <person name="Ishii S."/>
            <person name="Yamamoto J."/>
            <person name="Saito K."/>
            <person name="Kawai Y."/>
            <person name="Isono Y."/>
            <person name="Nakamura Y."/>
            <person name="Nagahari K."/>
            <person name="Murakami K."/>
            <person name="Yasuda T."/>
            <person name="Iwayanagi T."/>
            <person name="Wagatsuma M."/>
            <person name="Shiratori A."/>
            <person name="Sudo H."/>
            <person name="Hosoiri T."/>
            <person name="Kaku Y."/>
            <person name="Kodaira H."/>
            <person name="Kondo H."/>
            <person name="Sugawara M."/>
            <person name="Takahashi M."/>
            <person name="Kanda K."/>
            <person name="Yokoi T."/>
            <person name="Furuya T."/>
            <person name="Kikkawa E."/>
            <person name="Omura Y."/>
            <person name="Abe K."/>
            <person name="Kamihara K."/>
            <person name="Katsuta N."/>
            <person name="Sato K."/>
            <person name="Tanikawa M."/>
            <person name="Yamazaki M."/>
            <person name="Ninomiya K."/>
            <person name="Ishibashi T."/>
            <person name="Yamashita H."/>
            <person name="Murakawa K."/>
            <person name="Fujimori K."/>
            <person name="Tanai H."/>
            <person name="Kimata M."/>
            <person name="Watanabe M."/>
            <person name="Hiraoka S."/>
            <person name="Chiba Y."/>
            <person name="Ishida S."/>
            <person name="Ono Y."/>
            <person name="Takiguchi S."/>
            <person name="Watanabe S."/>
            <person name="Yosida M."/>
            <person name="Hotuta T."/>
            <person name="Kusano J."/>
            <person name="Kanehori K."/>
            <person name="Takahashi-Fujii A."/>
            <person name="Hara H."/>
            <person name="Tanase T.-O."/>
            <person name="Nomura Y."/>
            <person name="Togiya S."/>
            <person name="Komai F."/>
            <person name="Hara R."/>
            <person name="Takeuchi K."/>
            <person name="Arita M."/>
            <person name="Imose N."/>
            <person name="Musashino K."/>
            <person name="Yuuki H."/>
            <person name="Oshima A."/>
            <person name="Sasaki N."/>
            <person name="Aotsuka S."/>
            <person name="Yoshikawa Y."/>
            <person name="Matsunawa H."/>
            <person name="Ichihara T."/>
            <person name="Shiohata N."/>
            <person name="Sano S."/>
            <person name="Moriya S."/>
            <person name="Momiyama H."/>
            <person name="Satoh N."/>
            <person name="Takami S."/>
            <person name="Terashima Y."/>
            <person name="Suzuki O."/>
            <person name="Nakagawa S."/>
            <person name="Senoh A."/>
            <person name="Mizoguchi H."/>
            <person name="Goto Y."/>
            <person name="Shimizu F."/>
            <person name="Wakebe H."/>
            <person name="Hishigaki H."/>
            <person name="Watanabe T."/>
            <person name="Sugiyama A."/>
            <person name="Takemoto M."/>
            <person name="Kawakami B."/>
            <person name="Yamazaki M."/>
            <person name="Watanabe K."/>
            <person name="Kumagai A."/>
            <person name="Itakura S."/>
            <person name="Fukuzumi Y."/>
            <person name="Fujimori Y."/>
            <person name="Komiyama M."/>
            <person name="Tashiro H."/>
            <person name="Tanigami A."/>
            <person name="Fujiwara T."/>
            <person name="Ono T."/>
            <person name="Yamada K."/>
            <person name="Fujii Y."/>
            <person name="Ozaki K."/>
            <person name="Hirao M."/>
            <person name="Ohmori Y."/>
            <person name="Kawabata A."/>
            <person name="Hikiji T."/>
            <person name="Kobatake N."/>
            <person name="Inagaki H."/>
            <person name="Ikema Y."/>
            <person name="Okamoto S."/>
            <person name="Okitani R."/>
            <person name="Kawakami T."/>
            <person name="Noguchi S."/>
            <person name="Itoh T."/>
            <person name="Shigeta K."/>
            <person name="Senba T."/>
            <person name="Matsumura K."/>
            <person name="Nakajima Y."/>
            <person name="Mizuno T."/>
            <person name="Morinaga M."/>
            <person name="Sasaki M."/>
            <person name="Togashi T."/>
            <person name="Oyama M."/>
            <person name="Hata H."/>
            <person name="Watanabe M."/>
            <person name="Komatsu T."/>
            <person name="Mizushima-Sugano J."/>
            <person name="Satoh T."/>
            <person name="Shirai Y."/>
            <person name="Takahashi Y."/>
            <person name="Nakagawa K."/>
            <person name="Okumura K."/>
            <person name="Nagase T."/>
            <person name="Nomura N."/>
            <person name="Kikuchi H."/>
            <person name="Masuho Y."/>
            <person name="Yamashita R."/>
            <person name="Nakai K."/>
            <person name="Yada T."/>
            <person name="Nakamura Y."/>
            <person name="Ohara O."/>
            <person name="Isogai T."/>
            <person name="Sugano S."/>
        </authorList>
    </citation>
    <scope>NUCLEOTIDE SEQUENCE [LARGE SCALE MRNA] (ISOFORM 5)</scope>
    <source>
        <tissue>Uterus</tissue>
    </source>
</reference>
<reference key="7">
    <citation type="journal article" date="2006" name="Nature">
        <title>The DNA sequence, annotation and analysis of human chromosome 3.</title>
        <authorList>
            <person name="Muzny D.M."/>
            <person name="Scherer S.E."/>
            <person name="Kaul R."/>
            <person name="Wang J."/>
            <person name="Yu J."/>
            <person name="Sudbrak R."/>
            <person name="Buhay C.J."/>
            <person name="Chen R."/>
            <person name="Cree A."/>
            <person name="Ding Y."/>
            <person name="Dugan-Rocha S."/>
            <person name="Gill R."/>
            <person name="Gunaratne P."/>
            <person name="Harris R.A."/>
            <person name="Hawes A.C."/>
            <person name="Hernandez J."/>
            <person name="Hodgson A.V."/>
            <person name="Hume J."/>
            <person name="Jackson A."/>
            <person name="Khan Z.M."/>
            <person name="Kovar-Smith C."/>
            <person name="Lewis L.R."/>
            <person name="Lozado R.J."/>
            <person name="Metzker M.L."/>
            <person name="Milosavljevic A."/>
            <person name="Miner G.R."/>
            <person name="Morgan M.B."/>
            <person name="Nazareth L.V."/>
            <person name="Scott G."/>
            <person name="Sodergren E."/>
            <person name="Song X.-Z."/>
            <person name="Steffen D."/>
            <person name="Wei S."/>
            <person name="Wheeler D.A."/>
            <person name="Wright M.W."/>
            <person name="Worley K.C."/>
            <person name="Yuan Y."/>
            <person name="Zhang Z."/>
            <person name="Adams C.Q."/>
            <person name="Ansari-Lari M.A."/>
            <person name="Ayele M."/>
            <person name="Brown M.J."/>
            <person name="Chen G."/>
            <person name="Chen Z."/>
            <person name="Clendenning J."/>
            <person name="Clerc-Blankenburg K.P."/>
            <person name="Chen R."/>
            <person name="Chen Z."/>
            <person name="Davis C."/>
            <person name="Delgado O."/>
            <person name="Dinh H.H."/>
            <person name="Dong W."/>
            <person name="Draper H."/>
            <person name="Ernst S."/>
            <person name="Fu G."/>
            <person name="Gonzalez-Garay M.L."/>
            <person name="Garcia D.K."/>
            <person name="Gillett W."/>
            <person name="Gu J."/>
            <person name="Hao B."/>
            <person name="Haugen E."/>
            <person name="Havlak P."/>
            <person name="He X."/>
            <person name="Hennig S."/>
            <person name="Hu S."/>
            <person name="Huang W."/>
            <person name="Jackson L.R."/>
            <person name="Jacob L.S."/>
            <person name="Kelly S.H."/>
            <person name="Kube M."/>
            <person name="Levy R."/>
            <person name="Li Z."/>
            <person name="Liu B."/>
            <person name="Liu J."/>
            <person name="Liu W."/>
            <person name="Lu J."/>
            <person name="Maheshwari M."/>
            <person name="Nguyen B.-V."/>
            <person name="Okwuonu G.O."/>
            <person name="Palmeiri A."/>
            <person name="Pasternak S."/>
            <person name="Perez L.M."/>
            <person name="Phelps K.A."/>
            <person name="Plopper F.J."/>
            <person name="Qiang B."/>
            <person name="Raymond C."/>
            <person name="Rodriguez R."/>
            <person name="Saenphimmachak C."/>
            <person name="Santibanez J."/>
            <person name="Shen H."/>
            <person name="Shen Y."/>
            <person name="Subramanian S."/>
            <person name="Tabor P.E."/>
            <person name="Verduzco D."/>
            <person name="Waldron L."/>
            <person name="Wang J."/>
            <person name="Wang J."/>
            <person name="Wang Q."/>
            <person name="Williams G.A."/>
            <person name="Wong G.K.-S."/>
            <person name="Yao Z."/>
            <person name="Zhang J."/>
            <person name="Zhang X."/>
            <person name="Zhao G."/>
            <person name="Zhou J."/>
            <person name="Zhou Y."/>
            <person name="Nelson D."/>
            <person name="Lehrach H."/>
            <person name="Reinhardt R."/>
            <person name="Naylor S.L."/>
            <person name="Yang H."/>
            <person name="Olson M."/>
            <person name="Weinstock G."/>
            <person name="Gibbs R.A."/>
        </authorList>
    </citation>
    <scope>NUCLEOTIDE SEQUENCE [LARGE SCALE GENOMIC DNA]</scope>
</reference>
<reference key="8">
    <citation type="submission" date="2005-09" db="EMBL/GenBank/DDBJ databases">
        <authorList>
            <person name="Mural R.J."/>
            <person name="Istrail S."/>
            <person name="Sutton G.G."/>
            <person name="Florea L."/>
            <person name="Halpern A.L."/>
            <person name="Mobarry C.M."/>
            <person name="Lippert R."/>
            <person name="Walenz B."/>
            <person name="Shatkay H."/>
            <person name="Dew I."/>
            <person name="Miller J.R."/>
            <person name="Flanigan M.J."/>
            <person name="Edwards N.J."/>
            <person name="Bolanos R."/>
            <person name="Fasulo D."/>
            <person name="Halldorsson B.V."/>
            <person name="Hannenhalli S."/>
            <person name="Turner R."/>
            <person name="Yooseph S."/>
            <person name="Lu F."/>
            <person name="Nusskern D.R."/>
            <person name="Shue B.C."/>
            <person name="Zheng X.H."/>
            <person name="Zhong F."/>
            <person name="Delcher A.L."/>
            <person name="Huson D.H."/>
            <person name="Kravitz S.A."/>
            <person name="Mouchard L."/>
            <person name="Reinert K."/>
            <person name="Remington K.A."/>
            <person name="Clark A.G."/>
            <person name="Waterman M.S."/>
            <person name="Eichler E.E."/>
            <person name="Adams M.D."/>
            <person name="Hunkapiller M.W."/>
            <person name="Myers E.W."/>
            <person name="Venter J.C."/>
        </authorList>
    </citation>
    <scope>NUCLEOTIDE SEQUENCE [LARGE SCALE GENOMIC DNA]</scope>
</reference>
<reference key="9">
    <citation type="journal article" date="2000" name="J. Neurosci.">
        <title>Rectification and rapid activation at low Ca2+ of Ca2+-activated, voltage-dependent BK currents: consequences of rapid inactivation by a novel beta subunit.</title>
        <authorList>
            <person name="Xia X.-M."/>
            <person name="Ding J.-P."/>
            <person name="Zeng X.-H."/>
            <person name="Duan K.-L."/>
            <person name="Lingle C.J."/>
        </authorList>
    </citation>
    <scope>FUNCTION</scope>
</reference>
<reference key="10">
    <citation type="journal article" date="2001" name="J. Gen. Physiol.">
        <title>Inactivation of BK channels mediated by the NH(2) terminus of the beta3b auxiliary subunit involves a two-step mechanism: possible separation of binding and blockade.</title>
        <authorList>
            <person name="Lingle C.J."/>
            <person name="Zeng X.-H."/>
            <person name="Ding J.-P."/>
            <person name="Xia X.-M."/>
        </authorList>
    </citation>
    <scope>DOMAIN</scope>
</reference>
<reference key="11">
    <citation type="journal article" date="2001" name="J. Gen. Physiol.">
        <title>Gating properties conferred on BK channels by the beta3b auxiliary subunit in the absence of its NH(2)- and COOH termini.</title>
        <authorList>
            <person name="Zeng X.-H."/>
            <person name="Ding J.-P."/>
            <person name="Xia X.-M."/>
            <person name="Lingle C.J."/>
        </authorList>
    </citation>
    <scope>DOMAIN</scope>
</reference>
<reference key="12">
    <citation type="journal article" date="2003" name="Physiol. Genomics">
        <title>Variants of the KCNMB3 regulatory subunit of maxi BK channels affect channel inactivation.</title>
        <authorList>
            <person name="Hu S."/>
            <person name="Labuda M.Z."/>
            <person name="Pandolfo M."/>
            <person name="Goss G.G."/>
            <person name="McDermid H.E."/>
            <person name="Ali D.W."/>
        </authorList>
    </citation>
    <scope>VARIANTS VAL-75; SER-165 AND THR-230</scope>
</reference>
<reference key="13">
    <citation type="journal article" date="2003" name="Nat. Struct. Biol.">
        <title>Redox-sensitive extracellular gates formed by auxiliary beta subunits of calcium-activated potassium channels.</title>
        <authorList>
            <person name="Zeng X.-H."/>
            <person name="Xia X.-M."/>
            <person name="Lingle C.J."/>
        </authorList>
    </citation>
    <scope>DISULFIDE BONDS</scope>
    <scope>DOMAIN</scope>
</reference>
<reference key="14">
    <citation type="journal article" date="2002" name="News Physiol. Sci.">
        <title>New disguises for an old channel: MaxiK channel beta-subunits.</title>
        <authorList>
            <person name="Orio P."/>
            <person name="Rojas P."/>
            <person name="Ferreira G."/>
            <person name="Latorre R."/>
        </authorList>
    </citation>
    <scope>REVIEW</scope>
</reference>
<sequence length="279" mass="31604">MDFSPSSELGFHFVAFILLTRHRTAFPASGKKRETDYSDGDPLDVHKRLPSSAGEDRAVMLGFAMMGFSVLMFFLLGTTILKPFMLSIQREESTCTAIHTDIMDDWLDCAFTCGVHCHGQGKYPCLQVFVNLSHPGQKALLHYNEEAVQINPKCFYTPKCHQDRNDLLNSALDIKEFFDHKNGTPFSCFYSPASQSEDVILIKKYDQMAIFHCLFWPSLTLLGGALIVGMVRLTQHLSLLCEKYSTVVRDEVGGKVPYIEQHQFKLCIMRRSKGRAEKS</sequence>
<dbReference type="EMBL" id="AF139471">
    <property type="protein sequence ID" value="AAD54771.1"/>
    <property type="molecule type" value="mRNA"/>
</dbReference>
<dbReference type="EMBL" id="AF214561">
    <property type="protein sequence ID" value="AAF36598.1"/>
    <property type="molecule type" value="mRNA"/>
</dbReference>
<dbReference type="EMBL" id="AF204159">
    <property type="protein sequence ID" value="AAF97031.1"/>
    <property type="molecule type" value="Genomic_DNA"/>
</dbReference>
<dbReference type="EMBL" id="AF204160">
    <property type="protein sequence ID" value="AAF97032.1"/>
    <property type="molecule type" value="Genomic_DNA"/>
</dbReference>
<dbReference type="EMBL" id="AF204161">
    <property type="protein sequence ID" value="AAF97033.1"/>
    <property type="molecule type" value="Genomic_DNA"/>
</dbReference>
<dbReference type="EMBL" id="AF204162">
    <property type="protein sequence ID" value="AAF97034.1"/>
    <property type="molecule type" value="Genomic_DNA"/>
</dbReference>
<dbReference type="EMBL" id="AF160968">
    <property type="protein sequence ID" value="AAF67811.1"/>
    <property type="molecule type" value="mRNA"/>
</dbReference>
<dbReference type="EMBL" id="AF170916">
    <property type="protein sequence ID" value="AAF89698.1"/>
    <property type="molecule type" value="mRNA"/>
</dbReference>
<dbReference type="EMBL" id="AK304837">
    <property type="protein sequence ID" value="BAH14265.1"/>
    <property type="molecule type" value="mRNA"/>
</dbReference>
<dbReference type="EMBL" id="AC007823">
    <property type="status" value="NOT_ANNOTATED_CDS"/>
    <property type="molecule type" value="Genomic_DNA"/>
</dbReference>
<dbReference type="EMBL" id="AC076966">
    <property type="status" value="NOT_ANNOTATED_CDS"/>
    <property type="molecule type" value="Genomic_DNA"/>
</dbReference>
<dbReference type="EMBL" id="CH471052">
    <property type="protein sequence ID" value="EAW78418.1"/>
    <property type="molecule type" value="Genomic_DNA"/>
</dbReference>
<dbReference type="EMBL" id="CH471052">
    <property type="protein sequence ID" value="EAW78421.1"/>
    <property type="molecule type" value="Genomic_DNA"/>
</dbReference>
<dbReference type="CCDS" id="CCDS3225.1">
    <molecule id="Q9NPA1-2"/>
</dbReference>
<dbReference type="CCDS" id="CCDS3226.1">
    <molecule id="Q9NPA1-1"/>
</dbReference>
<dbReference type="CCDS" id="CCDS43172.1">
    <molecule id="Q9NPA1-4"/>
</dbReference>
<dbReference type="CCDS" id="CCDS43173.1">
    <molecule id="Q9NPA1-3"/>
</dbReference>
<dbReference type="CCDS" id="CCDS54683.1">
    <molecule id="Q9NPA1-5"/>
</dbReference>
<dbReference type="RefSeq" id="NP_001157149.1">
    <molecule id="Q9NPA1-5"/>
    <property type="nucleotide sequence ID" value="NM_001163677.2"/>
</dbReference>
<dbReference type="RefSeq" id="NP_055222.3">
    <molecule id="Q9NPA1-1"/>
    <property type="nucleotide sequence ID" value="NM_014407.3"/>
</dbReference>
<dbReference type="RefSeq" id="NP_741979.1">
    <molecule id="Q9NPA1-2"/>
    <property type="nucleotide sequence ID" value="NM_171828.3"/>
</dbReference>
<dbReference type="RefSeq" id="NP_741980.1">
    <molecule id="Q9NPA1-4"/>
    <property type="nucleotide sequence ID" value="NM_171829.3"/>
</dbReference>
<dbReference type="RefSeq" id="NP_741981.1">
    <molecule id="Q9NPA1-3"/>
    <property type="nucleotide sequence ID" value="NM_171830.2"/>
</dbReference>
<dbReference type="EMDB" id="EMD-46467"/>
<dbReference type="EMDB" id="EMD-46468"/>
<dbReference type="SMR" id="Q9NPA1"/>
<dbReference type="BioGRID" id="117996">
    <property type="interactions" value="54"/>
</dbReference>
<dbReference type="FunCoup" id="Q9NPA1">
    <property type="interactions" value="332"/>
</dbReference>
<dbReference type="IntAct" id="Q9NPA1">
    <property type="interactions" value="52"/>
</dbReference>
<dbReference type="STRING" id="9606.ENSP00000319370"/>
<dbReference type="DrugBank" id="DB02587">
    <property type="generic name" value="Colforsin"/>
</dbReference>
<dbReference type="DrugBank" id="DB01110">
    <property type="generic name" value="Miconazole"/>
</dbReference>
<dbReference type="DrugBank" id="DB01054">
    <property type="generic name" value="Nitrendipine"/>
</dbReference>
<dbReference type="DrugBank" id="DB00721">
    <property type="generic name" value="Procaine"/>
</dbReference>
<dbReference type="DrugBank" id="DB00867">
    <property type="generic name" value="Ritodrine"/>
</dbReference>
<dbReference type="DrugBank" id="DB09089">
    <property type="generic name" value="Trimebutine"/>
</dbReference>
<dbReference type="TCDB" id="8.A.14.1.4">
    <property type="family name" value="the ca(2+)-activated k(+) channel auxiliary subunit slowpoke-Beta (sloBeta) family"/>
</dbReference>
<dbReference type="GlyCosmos" id="Q9NPA1">
    <property type="glycosylation" value="1 site, No reported glycans"/>
</dbReference>
<dbReference type="GlyGen" id="Q9NPA1">
    <property type="glycosylation" value="1 site"/>
</dbReference>
<dbReference type="BioMuta" id="KCNMB3"/>
<dbReference type="DMDM" id="90111824"/>
<dbReference type="MassIVE" id="Q9NPA1"/>
<dbReference type="PaxDb" id="9606-ENSP00000319370"/>
<dbReference type="ABCD" id="Q9NPA1">
    <property type="antibodies" value="1 sequenced antibody"/>
</dbReference>
<dbReference type="Antibodypedia" id="3055">
    <property type="antibodies" value="269 antibodies from 32 providers"/>
</dbReference>
<dbReference type="DNASU" id="27094"/>
<dbReference type="Ensembl" id="ENST00000314235.9">
    <molecule id="Q9NPA1-1"/>
    <property type="protein sequence ID" value="ENSP00000319370.5"/>
    <property type="gene ID" value="ENSG00000171121.17"/>
</dbReference>
<dbReference type="Ensembl" id="ENST00000349697.2">
    <molecule id="Q9NPA1-2"/>
    <property type="protein sequence ID" value="ENSP00000327866.2"/>
    <property type="gene ID" value="ENSG00000171121.17"/>
</dbReference>
<dbReference type="Ensembl" id="ENST00000392685.7">
    <molecule id="Q9NPA1-3"/>
    <property type="protein sequence ID" value="ENSP00000376451.2"/>
    <property type="gene ID" value="ENSG00000171121.17"/>
</dbReference>
<dbReference type="Ensembl" id="ENST00000392686.6">
    <molecule id="Q9NPA1-4"/>
    <property type="protein sequence ID" value="ENSP00000376452.2"/>
    <property type="gene ID" value="ENSG00000171121.17"/>
</dbReference>
<dbReference type="Ensembl" id="ENST00000485523.5">
    <molecule id="Q9NPA1-4"/>
    <property type="protein sequence ID" value="ENSP00000418536.1"/>
    <property type="gene ID" value="ENSG00000171121.17"/>
</dbReference>
<dbReference type="Ensembl" id="ENST00000497599.5">
    <molecule id="Q9NPA1-5"/>
    <property type="protein sequence ID" value="ENSP00000417091.1"/>
    <property type="gene ID" value="ENSG00000171121.17"/>
</dbReference>
<dbReference type="GeneID" id="27094"/>
<dbReference type="KEGG" id="hsa:27094"/>
<dbReference type="MANE-Select" id="ENST00000392685.7">
    <molecule id="Q9NPA1-3"/>
    <property type="protein sequence ID" value="ENSP00000376451.2"/>
    <property type="RefSeq nucleotide sequence ID" value="NM_171830.2"/>
    <property type="RefSeq protein sequence ID" value="NP_741981.1"/>
</dbReference>
<dbReference type="UCSC" id="uc003fjm.4">
    <molecule id="Q9NPA1-1"/>
    <property type="organism name" value="human"/>
</dbReference>
<dbReference type="AGR" id="HGNC:6287"/>
<dbReference type="CTD" id="27094"/>
<dbReference type="DisGeNET" id="27094"/>
<dbReference type="GeneCards" id="KCNMB3"/>
<dbReference type="HGNC" id="HGNC:6287">
    <property type="gene designation" value="KCNMB3"/>
</dbReference>
<dbReference type="HPA" id="ENSG00000171121">
    <property type="expression patterns" value="Low tissue specificity"/>
</dbReference>
<dbReference type="MIM" id="605222">
    <property type="type" value="gene"/>
</dbReference>
<dbReference type="neXtProt" id="NX_Q9NPA1"/>
<dbReference type="OpenTargets" id="ENSG00000171121"/>
<dbReference type="PharmGKB" id="PA30067"/>
<dbReference type="VEuPathDB" id="HostDB:ENSG00000171121"/>
<dbReference type="eggNOG" id="ENOG502QR4Z">
    <property type="taxonomic scope" value="Eukaryota"/>
</dbReference>
<dbReference type="GeneTree" id="ENSGT00950000183039"/>
<dbReference type="HOGENOM" id="CLU_085739_1_0_1"/>
<dbReference type="InParanoid" id="Q9NPA1"/>
<dbReference type="OMA" id="CEKYSAA"/>
<dbReference type="OrthoDB" id="5973433at2759"/>
<dbReference type="PAN-GO" id="Q9NPA1">
    <property type="GO annotations" value="4 GO annotations based on evolutionary models"/>
</dbReference>
<dbReference type="PhylomeDB" id="Q9NPA1"/>
<dbReference type="TreeFam" id="TF328589"/>
<dbReference type="PathwayCommons" id="Q9NPA1"/>
<dbReference type="Reactome" id="R-HSA-1296052">
    <property type="pathway name" value="Ca2+ activated K+ channels"/>
</dbReference>
<dbReference type="Reactome" id="R-HSA-418457">
    <property type="pathway name" value="cGMP effects"/>
</dbReference>
<dbReference type="BioGRID-ORCS" id="27094">
    <property type="hits" value="12 hits in 1165 CRISPR screens"/>
</dbReference>
<dbReference type="ChiTaRS" id="KCNMB3">
    <property type="organism name" value="human"/>
</dbReference>
<dbReference type="GeneWiki" id="KCNMB3"/>
<dbReference type="GenomeRNAi" id="27094"/>
<dbReference type="Pharos" id="Q9NPA1">
    <property type="development level" value="Tbio"/>
</dbReference>
<dbReference type="PRO" id="PR:Q9NPA1"/>
<dbReference type="Proteomes" id="UP000005640">
    <property type="component" value="Chromosome 3"/>
</dbReference>
<dbReference type="RNAct" id="Q9NPA1">
    <property type="molecule type" value="protein"/>
</dbReference>
<dbReference type="Bgee" id="ENSG00000171121">
    <property type="expression patterns" value="Expressed in primary visual cortex and 97 other cell types or tissues"/>
</dbReference>
<dbReference type="ExpressionAtlas" id="Q9NPA1">
    <property type="expression patterns" value="baseline and differential"/>
</dbReference>
<dbReference type="GO" id="GO:0005886">
    <property type="term" value="C:plasma membrane"/>
    <property type="evidence" value="ECO:0000314"/>
    <property type="project" value="UniProtKB"/>
</dbReference>
<dbReference type="GO" id="GO:0008076">
    <property type="term" value="C:voltage-gated potassium channel complex"/>
    <property type="evidence" value="ECO:0000314"/>
    <property type="project" value="UniProtKB"/>
</dbReference>
<dbReference type="GO" id="GO:0015269">
    <property type="term" value="F:calcium-activated potassium channel activity"/>
    <property type="evidence" value="ECO:0000314"/>
    <property type="project" value="UniProtKB"/>
</dbReference>
<dbReference type="GO" id="GO:0015459">
    <property type="term" value="F:potassium channel regulator activity"/>
    <property type="evidence" value="ECO:0000318"/>
    <property type="project" value="GO_Central"/>
</dbReference>
<dbReference type="GO" id="GO:0001508">
    <property type="term" value="P:action potential"/>
    <property type="evidence" value="ECO:0000314"/>
    <property type="project" value="UniProtKB"/>
</dbReference>
<dbReference type="GO" id="GO:0005513">
    <property type="term" value="P:detection of calcium ion"/>
    <property type="evidence" value="ECO:0000314"/>
    <property type="project" value="UniProtKB"/>
</dbReference>
<dbReference type="GO" id="GO:0019228">
    <property type="term" value="P:neuronal action potential"/>
    <property type="evidence" value="ECO:0000314"/>
    <property type="project" value="UniProtKB"/>
</dbReference>
<dbReference type="GO" id="GO:0006813">
    <property type="term" value="P:potassium ion transport"/>
    <property type="evidence" value="ECO:0000314"/>
    <property type="project" value="UniProtKB"/>
</dbReference>
<dbReference type="InterPro" id="IPR003930">
    <property type="entry name" value="K_chnl_Ca-activ_BK_bsu"/>
</dbReference>
<dbReference type="PANTHER" id="PTHR10258">
    <property type="entry name" value="CALCIUM-ACTIVATED POTASSIUM CHANNEL SUBUNIT BETA"/>
    <property type="match status" value="1"/>
</dbReference>
<dbReference type="PANTHER" id="PTHR10258:SF4">
    <property type="entry name" value="CALCIUM-ACTIVATED POTASSIUM CHANNEL SUBUNIT BETA-3"/>
    <property type="match status" value="1"/>
</dbReference>
<dbReference type="Pfam" id="PF03185">
    <property type="entry name" value="CaKB"/>
    <property type="match status" value="1"/>
</dbReference>
<comment type="function">
    <text evidence="4 7">Regulatory subunit of the calcium activated potassium KCNMA1 (maxiK) channel. Modulates the calcium sensitivity and gating kinetics of KCNMA1, thereby contributing to KCNMA1 channel diversity. Alters the functional properties of the current expressed by the KCNMA1 channel. Isoform 2, isoform 3 and isoform 4 partially inactivate the current of KCNBMA. Isoform 4 induces a fast and incomplete inactivation of KCNMA1 channel that is detectable only at large depolarizations. In contrast, isoform 1 does not induce detectable inactivation of KCNMA1. Two or more subunits of KCNMB3 are required to block the KCNMA1 tetramer.</text>
</comment>
<comment type="subunit">
    <text evidence="3">Interacts with KCNMA1 tetramer. There are probably 4 molecules of KCMNB3 per KCNMA1 tetramer.</text>
</comment>
<comment type="subcellular location">
    <subcellularLocation>
        <location>Membrane</location>
        <topology>Multi-pass membrane protein</topology>
    </subcellularLocation>
</comment>
<comment type="alternative products">
    <event type="alternative splicing"/>
    <isoform>
        <id>Q9NPA1-1</id>
        <name>1</name>
        <name>3d</name>
        <sequence type="displayed"/>
    </isoform>
    <isoform>
        <id>Q9NPA1-2</id>
        <name>2</name>
        <name>3a</name>
        <sequence type="described" ref="VSP_009827"/>
    </isoform>
    <isoform>
        <id>Q9NPA1-3</id>
        <name>3</name>
        <name>3c</name>
        <sequence type="described" ref="VSP_009828"/>
    </isoform>
    <isoform>
        <id>Q9NPA1-4</id>
        <name>4</name>
        <name>3b</name>
        <sequence type="described" ref="VSP_009829 VSP_009830"/>
    </isoform>
    <isoform>
        <id>Q9NPA1-5</id>
        <name>5</name>
        <sequence type="described" ref="VSP_009827 VSP_046090 VSP_046091"/>
    </isoform>
</comment>
<comment type="tissue specificity">
    <text evidence="2 3 4">Isoform 1, isoform 3 and isoform 4 are widely expressed. Isoform 2 is expressed placenta, pancreas, kidney and heart. Isoform 1 and isoform 3 are highly expressed in pancreas and testis.</text>
</comment>
<comment type="domain">
    <text>Isoform 4 cytoplasmic N-terminal domain participates in the partial inactivation of KCNMA1, possibly by binding to a receptor site.</text>
</comment>
<comment type="domain">
    <text>The extracellular domain forms gates to block ion permeation, providing a mechanism by which current can be rapidly diminished upon cellular repolarization.</text>
</comment>
<comment type="PTM">
    <text evidence="5">N-glycosylated.</text>
</comment>
<comment type="PTM">
    <text>The extracellular domain contains disulfide bond essential for the gating mechanism.</text>
</comment>
<comment type="similarity">
    <text evidence="13">Belongs to the KCNMB (TC 8.A.14.1) family. KCNMB3 subfamily.</text>
</comment>
<name>KCMB3_HUMAN</name>
<feature type="chain" id="PRO_0000187054" description="Calcium-activated potassium channel subunit beta-3">
    <location>
        <begin position="1"/>
        <end position="279"/>
    </location>
</feature>
<feature type="topological domain" description="Cytoplasmic" evidence="1">
    <location>
        <begin position="1"/>
        <end position="60"/>
    </location>
</feature>
<feature type="transmembrane region" description="Helical; Name=1" evidence="1">
    <location>
        <begin position="61"/>
        <end position="81"/>
    </location>
</feature>
<feature type="topological domain" description="Extracellular" evidence="1">
    <location>
        <begin position="82"/>
        <end position="207"/>
    </location>
</feature>
<feature type="transmembrane region" description="Helical; Name=2" evidence="1">
    <location>
        <begin position="208"/>
        <end position="228"/>
    </location>
</feature>
<feature type="topological domain" description="Cytoplasmic" evidence="1">
    <location>
        <begin position="229"/>
        <end position="279"/>
    </location>
</feature>
<feature type="glycosylation site" description="N-linked (GlcNAc...) asparagine" evidence="1">
    <location>
        <position position="131"/>
    </location>
</feature>
<feature type="splice variant" id="VSP_009827" description="In isoform 2 and isoform 5." evidence="12">
    <original>MDFSPSSELGFHFVAFILLTRH</original>
    <variation>MQPFSIPVQITLQGSRRRQG</variation>
    <location>
        <begin position="1"/>
        <end position="22"/>
    </location>
</feature>
<feature type="splice variant" id="VSP_009828" description="In isoform 3." evidence="9">
    <original>MDFSPSSELGFHFVAFILLTRH</original>
    <variation>MFPLLYELTAVSPSPFPQ</variation>
    <location>
        <begin position="1"/>
        <end position="22"/>
    </location>
</feature>
<feature type="splice variant" id="VSP_009829" description="In isoform 4." evidence="10 11">
    <location>
        <begin position="1"/>
        <end position="22"/>
    </location>
</feature>
<feature type="splice variant" id="VSP_009830" description="In isoform 4." evidence="10 11">
    <original>R</original>
    <variation>M</variation>
    <location>
        <position position="23"/>
    </location>
</feature>
<feature type="splice variant" id="VSP_046090" description="In isoform 5." evidence="12">
    <original>CFYTPKCHQDRNDLLNSALDIK</original>
    <variation>RDVTDCRVKEKQTLTVSDEHKQ</variation>
    <location>
        <begin position="154"/>
        <end position="175"/>
    </location>
</feature>
<feature type="splice variant" id="VSP_046091" description="In isoform 5." evidence="12">
    <location>
        <begin position="176"/>
        <end position="279"/>
    </location>
</feature>
<feature type="sequence variant" id="VAR_018173" description="In dbSNP:rs1170672.">
    <original>D</original>
    <variation>G</variation>
    <location>
        <position position="44"/>
    </location>
</feature>
<feature type="sequence variant" id="VAR_018174" description="In dbSNP:rs7645550." evidence="2 3 4 5 6">
    <original>A</original>
    <variation>T</variation>
    <location>
        <position position="53"/>
    </location>
</feature>
<feature type="sequence variant" id="VAR_018175" description="In dbSNP:rs2276802." evidence="8">
    <original>L</original>
    <variation>V</variation>
    <location>
        <position position="75"/>
    </location>
</feature>
<feature type="sequence variant" id="VAR_018176" description="In dbSNP:rs55710741." evidence="4 8">
    <original>N</original>
    <variation>S</variation>
    <location>
        <position position="165"/>
    </location>
</feature>
<feature type="sequence variant" id="VAR_018177" description="In dbSNP:rs145985409." evidence="8">
    <original>M</original>
    <variation>T</variation>
    <location>
        <position position="230"/>
    </location>
</feature>
<feature type="sequence conflict" description="In Ref. 6; BAH14265." evidence="13" ref="6">
    <original>T</original>
    <variation>P</variation>
    <location>
        <position position="24"/>
    </location>
</feature>
<keyword id="KW-0025">Alternative splicing</keyword>
<keyword id="KW-1015">Disulfide bond</keyword>
<keyword id="KW-0325">Glycoprotein</keyword>
<keyword id="KW-0407">Ion channel</keyword>
<keyword id="KW-0406">Ion transport</keyword>
<keyword id="KW-0472">Membrane</keyword>
<keyword id="KW-1185">Reference proteome</keyword>
<keyword id="KW-0812">Transmembrane</keyword>
<keyword id="KW-1133">Transmembrane helix</keyword>
<keyword id="KW-0813">Transport</keyword>